<gene>
    <name type="ordered locus">lin1612</name>
</gene>
<proteinExistence type="inferred from homology"/>
<evidence type="ECO:0000255" key="1">
    <source>
        <dbReference type="HAMAP-Rule" id="MF_00457"/>
    </source>
</evidence>
<sequence>MKISFHGQSCIKIITGNTTILVDPFISGNEKCDLKAEEQMPDFIVLSHGHDDHVGDTVEIAKNSGATVICNADLASFLAVEDGLENIAPMHIGGKRQFDFGQVKLTQAFHGSQTVRDGRIINLGFPTGIVFTIEGKNIYFAGDTGLFSDMKLIGELNPLDVAFLPIGDNFTMGPEDAAIAARFLQAKLVIPMHYNTFPLIEQDPHQFVASLDEGISGKVLEIGEGIEI</sequence>
<dbReference type="EMBL" id="AL596169">
    <property type="protein sequence ID" value="CAC96843.1"/>
    <property type="molecule type" value="Genomic_DNA"/>
</dbReference>
<dbReference type="PIR" id="AC1634">
    <property type="entry name" value="AC1634"/>
</dbReference>
<dbReference type="RefSeq" id="WP_003772005.1">
    <property type="nucleotide sequence ID" value="NC_003212.1"/>
</dbReference>
<dbReference type="SMR" id="Q92BD8"/>
<dbReference type="STRING" id="272626.gene:17565943"/>
<dbReference type="GeneID" id="93234994"/>
<dbReference type="KEGG" id="lin:lin1612"/>
<dbReference type="eggNOG" id="COG2220">
    <property type="taxonomic scope" value="Bacteria"/>
</dbReference>
<dbReference type="HOGENOM" id="CLU_070010_4_1_9"/>
<dbReference type="OrthoDB" id="9789133at2"/>
<dbReference type="Proteomes" id="UP000002513">
    <property type="component" value="Chromosome"/>
</dbReference>
<dbReference type="GO" id="GO:0016787">
    <property type="term" value="F:hydrolase activity"/>
    <property type="evidence" value="ECO:0007669"/>
    <property type="project" value="UniProtKB-UniRule"/>
</dbReference>
<dbReference type="Gene3D" id="3.60.15.10">
    <property type="entry name" value="Ribonuclease Z/Hydroxyacylglutathione hydrolase-like"/>
    <property type="match status" value="1"/>
</dbReference>
<dbReference type="HAMAP" id="MF_00457">
    <property type="entry name" value="UPF0173"/>
    <property type="match status" value="1"/>
</dbReference>
<dbReference type="InterPro" id="IPR001279">
    <property type="entry name" value="Metallo-B-lactamas"/>
</dbReference>
<dbReference type="InterPro" id="IPR036866">
    <property type="entry name" value="RibonucZ/Hydroxyglut_hydro"/>
</dbReference>
<dbReference type="InterPro" id="IPR022877">
    <property type="entry name" value="UPF0173"/>
</dbReference>
<dbReference type="InterPro" id="IPR050114">
    <property type="entry name" value="UPF0173_UPF0282_UlaG_hydrolase"/>
</dbReference>
<dbReference type="NCBIfam" id="NF001911">
    <property type="entry name" value="PRK00685.1"/>
    <property type="match status" value="1"/>
</dbReference>
<dbReference type="PANTHER" id="PTHR43546:SF3">
    <property type="entry name" value="UPF0173 METAL-DEPENDENT HYDROLASE MJ1163"/>
    <property type="match status" value="1"/>
</dbReference>
<dbReference type="PANTHER" id="PTHR43546">
    <property type="entry name" value="UPF0173 METAL-DEPENDENT HYDROLASE MJ1163-RELATED"/>
    <property type="match status" value="1"/>
</dbReference>
<dbReference type="Pfam" id="PF12706">
    <property type="entry name" value="Lactamase_B_2"/>
    <property type="match status" value="1"/>
</dbReference>
<dbReference type="SMART" id="SM00849">
    <property type="entry name" value="Lactamase_B"/>
    <property type="match status" value="1"/>
</dbReference>
<dbReference type="SUPFAM" id="SSF56281">
    <property type="entry name" value="Metallo-hydrolase/oxidoreductase"/>
    <property type="match status" value="1"/>
</dbReference>
<feature type="chain" id="PRO_0000156375" description="UPF0173 metal-dependent hydrolase lin1612">
    <location>
        <begin position="1"/>
        <end position="228"/>
    </location>
</feature>
<accession>Q92BD8</accession>
<keyword id="KW-0378">Hydrolase</keyword>
<reference key="1">
    <citation type="journal article" date="2001" name="Science">
        <title>Comparative genomics of Listeria species.</title>
        <authorList>
            <person name="Glaser P."/>
            <person name="Frangeul L."/>
            <person name="Buchrieser C."/>
            <person name="Rusniok C."/>
            <person name="Amend A."/>
            <person name="Baquero F."/>
            <person name="Berche P."/>
            <person name="Bloecker H."/>
            <person name="Brandt P."/>
            <person name="Chakraborty T."/>
            <person name="Charbit A."/>
            <person name="Chetouani F."/>
            <person name="Couve E."/>
            <person name="de Daruvar A."/>
            <person name="Dehoux P."/>
            <person name="Domann E."/>
            <person name="Dominguez-Bernal G."/>
            <person name="Duchaud E."/>
            <person name="Durant L."/>
            <person name="Dussurget O."/>
            <person name="Entian K.-D."/>
            <person name="Fsihi H."/>
            <person name="Garcia-del Portillo F."/>
            <person name="Garrido P."/>
            <person name="Gautier L."/>
            <person name="Goebel W."/>
            <person name="Gomez-Lopez N."/>
            <person name="Hain T."/>
            <person name="Hauf J."/>
            <person name="Jackson D."/>
            <person name="Jones L.-M."/>
            <person name="Kaerst U."/>
            <person name="Kreft J."/>
            <person name="Kuhn M."/>
            <person name="Kunst F."/>
            <person name="Kurapkat G."/>
            <person name="Madueno E."/>
            <person name="Maitournam A."/>
            <person name="Mata Vicente J."/>
            <person name="Ng E."/>
            <person name="Nedjari H."/>
            <person name="Nordsiek G."/>
            <person name="Novella S."/>
            <person name="de Pablos B."/>
            <person name="Perez-Diaz J.-C."/>
            <person name="Purcell R."/>
            <person name="Remmel B."/>
            <person name="Rose M."/>
            <person name="Schlueter T."/>
            <person name="Simoes N."/>
            <person name="Tierrez A."/>
            <person name="Vazquez-Boland J.-A."/>
            <person name="Voss H."/>
            <person name="Wehland J."/>
            <person name="Cossart P."/>
        </authorList>
    </citation>
    <scope>NUCLEOTIDE SEQUENCE [LARGE SCALE GENOMIC DNA]</scope>
    <source>
        <strain>ATCC BAA-680 / CLIP 11262</strain>
    </source>
</reference>
<name>Y1612_LISIN</name>
<comment type="similarity">
    <text evidence="1">Belongs to the UPF0173 family.</text>
</comment>
<protein>
    <recommendedName>
        <fullName evidence="1">UPF0173 metal-dependent hydrolase lin1612</fullName>
    </recommendedName>
</protein>
<organism>
    <name type="scientific">Listeria innocua serovar 6a (strain ATCC BAA-680 / CLIP 11262)</name>
    <dbReference type="NCBI Taxonomy" id="272626"/>
    <lineage>
        <taxon>Bacteria</taxon>
        <taxon>Bacillati</taxon>
        <taxon>Bacillota</taxon>
        <taxon>Bacilli</taxon>
        <taxon>Bacillales</taxon>
        <taxon>Listeriaceae</taxon>
        <taxon>Listeria</taxon>
    </lineage>
</organism>